<comment type="function">
    <text evidence="1">Nucleoside triphosphate pyrophosphatase that hydrolyzes dTTP and UTP. May have a dual role in cell division arrest and in preventing the incorporation of modified nucleotides into cellular nucleic acids.</text>
</comment>
<comment type="catalytic activity">
    <reaction evidence="1">
        <text>dTTP + H2O = dTMP + diphosphate + H(+)</text>
        <dbReference type="Rhea" id="RHEA:28534"/>
        <dbReference type="ChEBI" id="CHEBI:15377"/>
        <dbReference type="ChEBI" id="CHEBI:15378"/>
        <dbReference type="ChEBI" id="CHEBI:33019"/>
        <dbReference type="ChEBI" id="CHEBI:37568"/>
        <dbReference type="ChEBI" id="CHEBI:63528"/>
        <dbReference type="EC" id="3.6.1.9"/>
    </reaction>
</comment>
<comment type="catalytic activity">
    <reaction evidence="1">
        <text>UTP + H2O = UMP + diphosphate + H(+)</text>
        <dbReference type="Rhea" id="RHEA:29395"/>
        <dbReference type="ChEBI" id="CHEBI:15377"/>
        <dbReference type="ChEBI" id="CHEBI:15378"/>
        <dbReference type="ChEBI" id="CHEBI:33019"/>
        <dbReference type="ChEBI" id="CHEBI:46398"/>
        <dbReference type="ChEBI" id="CHEBI:57865"/>
        <dbReference type="EC" id="3.6.1.9"/>
    </reaction>
</comment>
<comment type="cofactor">
    <cofactor evidence="1">
        <name>a divalent metal cation</name>
        <dbReference type="ChEBI" id="CHEBI:60240"/>
    </cofactor>
</comment>
<comment type="subcellular location">
    <subcellularLocation>
        <location evidence="1">Cytoplasm</location>
    </subcellularLocation>
</comment>
<comment type="similarity">
    <text evidence="1">Belongs to the Maf family. YhdE subfamily.</text>
</comment>
<sequence length="196" mass="21905">MSAVQLYLASGSPRRQELLTQLGYQFERVVVDVEECHQPSETAEQYVQRLSRDKATAGVKKINATKTAVATMPVLGADTIVVVDETILEKPKDFNDAQRMLNLLSGRQHQVMTSVTVATVEREETQLVVTDVWFKTLSEKEIEKYWQSGEPQDKAGSYGIQGLGGKFITRIEGSYYAVMGLPLVETDVMVQNFLNL</sequence>
<proteinExistence type="inferred from homology"/>
<keyword id="KW-0963">Cytoplasm</keyword>
<keyword id="KW-0378">Hydrolase</keyword>
<keyword id="KW-0546">Nucleotide metabolism</keyword>
<keyword id="KW-1185">Reference proteome</keyword>
<organism>
    <name type="scientific">Photobacterium profundum (strain SS9)</name>
    <dbReference type="NCBI Taxonomy" id="298386"/>
    <lineage>
        <taxon>Bacteria</taxon>
        <taxon>Pseudomonadati</taxon>
        <taxon>Pseudomonadota</taxon>
        <taxon>Gammaproteobacteria</taxon>
        <taxon>Vibrionales</taxon>
        <taxon>Vibrionaceae</taxon>
        <taxon>Photobacterium</taxon>
    </lineage>
</organism>
<feature type="chain" id="PRO_0000267367" description="dTTP/UTP pyrophosphatase">
    <location>
        <begin position="1"/>
        <end position="196"/>
    </location>
</feature>
<feature type="active site" description="Proton acceptor" evidence="1">
    <location>
        <position position="78"/>
    </location>
</feature>
<feature type="site" description="Important for substrate specificity" evidence="1">
    <location>
        <position position="14"/>
    </location>
</feature>
<feature type="site" description="Important for substrate specificity" evidence="1">
    <location>
        <position position="79"/>
    </location>
</feature>
<feature type="site" description="Important for substrate specificity" evidence="1">
    <location>
        <position position="161"/>
    </location>
</feature>
<accession>Q6LMA4</accession>
<protein>
    <recommendedName>
        <fullName evidence="1">dTTP/UTP pyrophosphatase</fullName>
        <shortName evidence="1">dTTPase/UTPase</shortName>
        <ecNumber evidence="1">3.6.1.9</ecNumber>
    </recommendedName>
    <alternativeName>
        <fullName evidence="1">Nucleoside triphosphate pyrophosphatase</fullName>
    </alternativeName>
    <alternativeName>
        <fullName evidence="1">Nucleotide pyrophosphatase</fullName>
        <shortName evidence="1">Nucleotide PPase</shortName>
    </alternativeName>
</protein>
<dbReference type="EC" id="3.6.1.9" evidence="1"/>
<dbReference type="EMBL" id="CR378673">
    <property type="protein sequence ID" value="CAG21573.1"/>
    <property type="molecule type" value="Genomic_DNA"/>
</dbReference>
<dbReference type="RefSeq" id="WP_011219825.1">
    <property type="nucleotide sequence ID" value="NC_006370.1"/>
</dbReference>
<dbReference type="SMR" id="Q6LMA4"/>
<dbReference type="STRING" id="298386.PBPRA3267"/>
<dbReference type="KEGG" id="ppr:PBPRA3267"/>
<dbReference type="eggNOG" id="COG0424">
    <property type="taxonomic scope" value="Bacteria"/>
</dbReference>
<dbReference type="HOGENOM" id="CLU_040416_2_1_6"/>
<dbReference type="Proteomes" id="UP000000593">
    <property type="component" value="Chromosome 1"/>
</dbReference>
<dbReference type="GO" id="GO:0005737">
    <property type="term" value="C:cytoplasm"/>
    <property type="evidence" value="ECO:0007669"/>
    <property type="project" value="UniProtKB-SubCell"/>
</dbReference>
<dbReference type="GO" id="GO:0036218">
    <property type="term" value="F:dTTP diphosphatase activity"/>
    <property type="evidence" value="ECO:0007669"/>
    <property type="project" value="RHEA"/>
</dbReference>
<dbReference type="GO" id="GO:0036221">
    <property type="term" value="F:UTP diphosphatase activity"/>
    <property type="evidence" value="ECO:0007669"/>
    <property type="project" value="RHEA"/>
</dbReference>
<dbReference type="GO" id="GO:0009117">
    <property type="term" value="P:nucleotide metabolic process"/>
    <property type="evidence" value="ECO:0007669"/>
    <property type="project" value="UniProtKB-KW"/>
</dbReference>
<dbReference type="CDD" id="cd00555">
    <property type="entry name" value="Maf"/>
    <property type="match status" value="1"/>
</dbReference>
<dbReference type="FunFam" id="3.90.950.10:FF:000004">
    <property type="entry name" value="dTTP/UTP pyrophosphatase"/>
    <property type="match status" value="1"/>
</dbReference>
<dbReference type="Gene3D" id="3.90.950.10">
    <property type="match status" value="1"/>
</dbReference>
<dbReference type="HAMAP" id="MF_00528">
    <property type="entry name" value="Maf"/>
    <property type="match status" value="1"/>
</dbReference>
<dbReference type="InterPro" id="IPR029001">
    <property type="entry name" value="ITPase-like_fam"/>
</dbReference>
<dbReference type="InterPro" id="IPR003697">
    <property type="entry name" value="Maf-like"/>
</dbReference>
<dbReference type="NCBIfam" id="TIGR00172">
    <property type="entry name" value="maf"/>
    <property type="match status" value="1"/>
</dbReference>
<dbReference type="PANTHER" id="PTHR43213">
    <property type="entry name" value="BIFUNCTIONAL DTTP/UTP PYROPHOSPHATASE/METHYLTRANSFERASE PROTEIN-RELATED"/>
    <property type="match status" value="1"/>
</dbReference>
<dbReference type="PANTHER" id="PTHR43213:SF5">
    <property type="entry name" value="BIFUNCTIONAL DTTP_UTP PYROPHOSPHATASE_METHYLTRANSFERASE PROTEIN-RELATED"/>
    <property type="match status" value="1"/>
</dbReference>
<dbReference type="Pfam" id="PF02545">
    <property type="entry name" value="Maf"/>
    <property type="match status" value="1"/>
</dbReference>
<dbReference type="PIRSF" id="PIRSF006305">
    <property type="entry name" value="Maf"/>
    <property type="match status" value="1"/>
</dbReference>
<dbReference type="SUPFAM" id="SSF52972">
    <property type="entry name" value="ITPase-like"/>
    <property type="match status" value="1"/>
</dbReference>
<name>NTPPA_PHOPR</name>
<reference key="1">
    <citation type="journal article" date="2005" name="Science">
        <title>Life at depth: Photobacterium profundum genome sequence and expression analysis.</title>
        <authorList>
            <person name="Vezzi A."/>
            <person name="Campanaro S."/>
            <person name="D'Angelo M."/>
            <person name="Simonato F."/>
            <person name="Vitulo N."/>
            <person name="Lauro F.M."/>
            <person name="Cestaro A."/>
            <person name="Malacrida G."/>
            <person name="Simionati B."/>
            <person name="Cannata N."/>
            <person name="Romualdi C."/>
            <person name="Bartlett D.H."/>
            <person name="Valle G."/>
        </authorList>
    </citation>
    <scope>NUCLEOTIDE SEQUENCE [LARGE SCALE GENOMIC DNA]</scope>
    <source>
        <strain>ATCC BAA-1253 / SS9</strain>
    </source>
</reference>
<evidence type="ECO:0000255" key="1">
    <source>
        <dbReference type="HAMAP-Rule" id="MF_00528"/>
    </source>
</evidence>
<gene>
    <name type="ordered locus">PBPRA3267</name>
</gene>